<accession>A8GLE4</accession>
<comment type="similarity">
    <text evidence="1">Belongs to the bacterial ribosomal protein bL28 family.</text>
</comment>
<keyword id="KW-0687">Ribonucleoprotein</keyword>
<keyword id="KW-0689">Ribosomal protein</keyword>
<organism>
    <name type="scientific">Serratia proteamaculans (strain 568)</name>
    <dbReference type="NCBI Taxonomy" id="399741"/>
    <lineage>
        <taxon>Bacteria</taxon>
        <taxon>Pseudomonadati</taxon>
        <taxon>Pseudomonadota</taxon>
        <taxon>Gammaproteobacteria</taxon>
        <taxon>Enterobacterales</taxon>
        <taxon>Yersiniaceae</taxon>
        <taxon>Serratia</taxon>
    </lineage>
</organism>
<proteinExistence type="inferred from homology"/>
<feature type="chain" id="PRO_1000059957" description="Large ribosomal subunit protein bL28">
    <location>
        <begin position="1"/>
        <end position="78"/>
    </location>
</feature>
<feature type="region of interest" description="Disordered" evidence="2">
    <location>
        <begin position="1"/>
        <end position="21"/>
    </location>
</feature>
<evidence type="ECO:0000255" key="1">
    <source>
        <dbReference type="HAMAP-Rule" id="MF_00373"/>
    </source>
</evidence>
<evidence type="ECO:0000256" key="2">
    <source>
        <dbReference type="SAM" id="MobiDB-lite"/>
    </source>
</evidence>
<evidence type="ECO:0000305" key="3"/>
<name>RL28_SERP5</name>
<protein>
    <recommendedName>
        <fullName evidence="1">Large ribosomal subunit protein bL28</fullName>
    </recommendedName>
    <alternativeName>
        <fullName evidence="3">50S ribosomal protein L28</fullName>
    </alternativeName>
</protein>
<reference key="1">
    <citation type="submission" date="2007-09" db="EMBL/GenBank/DDBJ databases">
        <title>Complete sequence of chromosome of Serratia proteamaculans 568.</title>
        <authorList>
            <consortium name="US DOE Joint Genome Institute"/>
            <person name="Copeland A."/>
            <person name="Lucas S."/>
            <person name="Lapidus A."/>
            <person name="Barry K."/>
            <person name="Glavina del Rio T."/>
            <person name="Dalin E."/>
            <person name="Tice H."/>
            <person name="Pitluck S."/>
            <person name="Chain P."/>
            <person name="Malfatti S."/>
            <person name="Shin M."/>
            <person name="Vergez L."/>
            <person name="Schmutz J."/>
            <person name="Larimer F."/>
            <person name="Land M."/>
            <person name="Hauser L."/>
            <person name="Kyrpides N."/>
            <person name="Kim E."/>
            <person name="Taghavi S."/>
            <person name="Newman L."/>
            <person name="Vangronsveld J."/>
            <person name="van der Lelie D."/>
            <person name="Richardson P."/>
        </authorList>
    </citation>
    <scope>NUCLEOTIDE SEQUENCE [LARGE SCALE GENOMIC DNA]</scope>
    <source>
        <strain>568</strain>
    </source>
</reference>
<gene>
    <name evidence="1" type="primary">rpmB</name>
    <name type="ordered locus">Spro_4841</name>
</gene>
<dbReference type="EMBL" id="CP000826">
    <property type="protein sequence ID" value="ABV43934.1"/>
    <property type="molecule type" value="Genomic_DNA"/>
</dbReference>
<dbReference type="SMR" id="A8GLE4"/>
<dbReference type="STRING" id="399741.Spro_4841"/>
<dbReference type="KEGG" id="spe:Spro_4841"/>
<dbReference type="eggNOG" id="COG0227">
    <property type="taxonomic scope" value="Bacteria"/>
</dbReference>
<dbReference type="HOGENOM" id="CLU_064548_3_1_6"/>
<dbReference type="OrthoDB" id="9805609at2"/>
<dbReference type="GO" id="GO:0022625">
    <property type="term" value="C:cytosolic large ribosomal subunit"/>
    <property type="evidence" value="ECO:0007669"/>
    <property type="project" value="TreeGrafter"/>
</dbReference>
<dbReference type="GO" id="GO:0003735">
    <property type="term" value="F:structural constituent of ribosome"/>
    <property type="evidence" value="ECO:0007669"/>
    <property type="project" value="InterPro"/>
</dbReference>
<dbReference type="GO" id="GO:0006412">
    <property type="term" value="P:translation"/>
    <property type="evidence" value="ECO:0007669"/>
    <property type="project" value="UniProtKB-UniRule"/>
</dbReference>
<dbReference type="FunFam" id="2.30.170.40:FF:000001">
    <property type="entry name" value="50S ribosomal protein L28"/>
    <property type="match status" value="1"/>
</dbReference>
<dbReference type="Gene3D" id="2.30.170.40">
    <property type="entry name" value="Ribosomal protein L28/L24"/>
    <property type="match status" value="1"/>
</dbReference>
<dbReference type="HAMAP" id="MF_00373">
    <property type="entry name" value="Ribosomal_bL28"/>
    <property type="match status" value="1"/>
</dbReference>
<dbReference type="InterPro" id="IPR026569">
    <property type="entry name" value="Ribosomal_bL28"/>
</dbReference>
<dbReference type="InterPro" id="IPR034704">
    <property type="entry name" value="Ribosomal_bL28/bL31-like_sf"/>
</dbReference>
<dbReference type="InterPro" id="IPR001383">
    <property type="entry name" value="Ribosomal_bL28_bact-type"/>
</dbReference>
<dbReference type="InterPro" id="IPR037147">
    <property type="entry name" value="Ribosomal_bL28_sf"/>
</dbReference>
<dbReference type="NCBIfam" id="TIGR00009">
    <property type="entry name" value="L28"/>
    <property type="match status" value="1"/>
</dbReference>
<dbReference type="PANTHER" id="PTHR13528">
    <property type="entry name" value="39S RIBOSOMAL PROTEIN L28, MITOCHONDRIAL"/>
    <property type="match status" value="1"/>
</dbReference>
<dbReference type="PANTHER" id="PTHR13528:SF2">
    <property type="entry name" value="LARGE RIBOSOMAL SUBUNIT PROTEIN BL28M"/>
    <property type="match status" value="1"/>
</dbReference>
<dbReference type="Pfam" id="PF00830">
    <property type="entry name" value="Ribosomal_L28"/>
    <property type="match status" value="1"/>
</dbReference>
<dbReference type="SUPFAM" id="SSF143800">
    <property type="entry name" value="L28p-like"/>
    <property type="match status" value="1"/>
</dbReference>
<sequence>MSRVCQVTGKRPVSGNNRSHAMNATKRRFLPNLHSHRFWVEAEKRFVTLRVSAKGMRVIDKKGIETVLADLRTRGEKY</sequence>